<protein>
    <recommendedName>
        <fullName evidence="1">Large ribosomal subunit protein bL20</fullName>
    </recommendedName>
    <alternativeName>
        <fullName evidence="2">50S ribosomal protein L20</fullName>
    </alternativeName>
</protein>
<name>RL20_STRT2</name>
<proteinExistence type="inferred from homology"/>
<dbReference type="EMBL" id="CP000023">
    <property type="protein sequence ID" value="AAV60770.1"/>
    <property type="molecule type" value="Genomic_DNA"/>
</dbReference>
<dbReference type="RefSeq" id="WP_002885090.1">
    <property type="nucleotide sequence ID" value="NC_006448.1"/>
</dbReference>
<dbReference type="SMR" id="Q5M472"/>
<dbReference type="STRING" id="264199.stu1132"/>
<dbReference type="GeneID" id="93792170"/>
<dbReference type="KEGG" id="stl:stu1132"/>
<dbReference type="eggNOG" id="COG0292">
    <property type="taxonomic scope" value="Bacteria"/>
</dbReference>
<dbReference type="HOGENOM" id="CLU_123265_0_1_9"/>
<dbReference type="Proteomes" id="UP000001170">
    <property type="component" value="Chromosome"/>
</dbReference>
<dbReference type="GO" id="GO:1990904">
    <property type="term" value="C:ribonucleoprotein complex"/>
    <property type="evidence" value="ECO:0007669"/>
    <property type="project" value="UniProtKB-KW"/>
</dbReference>
<dbReference type="GO" id="GO:0005840">
    <property type="term" value="C:ribosome"/>
    <property type="evidence" value="ECO:0007669"/>
    <property type="project" value="UniProtKB-KW"/>
</dbReference>
<dbReference type="GO" id="GO:0019843">
    <property type="term" value="F:rRNA binding"/>
    <property type="evidence" value="ECO:0007669"/>
    <property type="project" value="UniProtKB-UniRule"/>
</dbReference>
<dbReference type="GO" id="GO:0003735">
    <property type="term" value="F:structural constituent of ribosome"/>
    <property type="evidence" value="ECO:0007669"/>
    <property type="project" value="InterPro"/>
</dbReference>
<dbReference type="GO" id="GO:0000027">
    <property type="term" value="P:ribosomal large subunit assembly"/>
    <property type="evidence" value="ECO:0007669"/>
    <property type="project" value="UniProtKB-UniRule"/>
</dbReference>
<dbReference type="GO" id="GO:0006412">
    <property type="term" value="P:translation"/>
    <property type="evidence" value="ECO:0007669"/>
    <property type="project" value="InterPro"/>
</dbReference>
<dbReference type="CDD" id="cd07026">
    <property type="entry name" value="Ribosomal_L20"/>
    <property type="match status" value="1"/>
</dbReference>
<dbReference type="FunFam" id="1.10.1900.20:FF:000001">
    <property type="entry name" value="50S ribosomal protein L20"/>
    <property type="match status" value="1"/>
</dbReference>
<dbReference type="Gene3D" id="6.10.160.10">
    <property type="match status" value="1"/>
</dbReference>
<dbReference type="Gene3D" id="1.10.1900.20">
    <property type="entry name" value="Ribosomal protein L20"/>
    <property type="match status" value="1"/>
</dbReference>
<dbReference type="HAMAP" id="MF_00382">
    <property type="entry name" value="Ribosomal_bL20"/>
    <property type="match status" value="1"/>
</dbReference>
<dbReference type="InterPro" id="IPR005813">
    <property type="entry name" value="Ribosomal_bL20"/>
</dbReference>
<dbReference type="InterPro" id="IPR049946">
    <property type="entry name" value="RIBOSOMAL_L20_CS"/>
</dbReference>
<dbReference type="InterPro" id="IPR035566">
    <property type="entry name" value="Ribosomal_protein_bL20_C"/>
</dbReference>
<dbReference type="NCBIfam" id="TIGR01032">
    <property type="entry name" value="rplT_bact"/>
    <property type="match status" value="1"/>
</dbReference>
<dbReference type="PANTHER" id="PTHR10986">
    <property type="entry name" value="39S RIBOSOMAL PROTEIN L20"/>
    <property type="match status" value="1"/>
</dbReference>
<dbReference type="Pfam" id="PF00453">
    <property type="entry name" value="Ribosomal_L20"/>
    <property type="match status" value="1"/>
</dbReference>
<dbReference type="PRINTS" id="PR00062">
    <property type="entry name" value="RIBOSOMALL20"/>
</dbReference>
<dbReference type="SUPFAM" id="SSF74731">
    <property type="entry name" value="Ribosomal protein L20"/>
    <property type="match status" value="1"/>
</dbReference>
<dbReference type="PROSITE" id="PS00937">
    <property type="entry name" value="RIBOSOMAL_L20"/>
    <property type="match status" value="1"/>
</dbReference>
<evidence type="ECO:0000255" key="1">
    <source>
        <dbReference type="HAMAP-Rule" id="MF_00382"/>
    </source>
</evidence>
<evidence type="ECO:0000305" key="2"/>
<reference key="1">
    <citation type="journal article" date="2004" name="Nat. Biotechnol.">
        <title>Complete sequence and comparative genome analysis of the dairy bacterium Streptococcus thermophilus.</title>
        <authorList>
            <person name="Bolotin A."/>
            <person name="Quinquis B."/>
            <person name="Renault P."/>
            <person name="Sorokin A."/>
            <person name="Ehrlich S.D."/>
            <person name="Kulakauskas S."/>
            <person name="Lapidus A."/>
            <person name="Goltsman E."/>
            <person name="Mazur M."/>
            <person name="Pusch G.D."/>
            <person name="Fonstein M."/>
            <person name="Overbeek R."/>
            <person name="Kyprides N."/>
            <person name="Purnelle B."/>
            <person name="Prozzi D."/>
            <person name="Ngui K."/>
            <person name="Masuy D."/>
            <person name="Hancy F."/>
            <person name="Burteau S."/>
            <person name="Boutry M."/>
            <person name="Delcour J."/>
            <person name="Goffeau A."/>
            <person name="Hols P."/>
        </authorList>
    </citation>
    <scope>NUCLEOTIDE SEQUENCE [LARGE SCALE GENOMIC DNA]</scope>
    <source>
        <strain>ATCC BAA-250 / LMG 18311</strain>
    </source>
</reference>
<comment type="function">
    <text evidence="1">Binds directly to 23S ribosomal RNA and is necessary for the in vitro assembly process of the 50S ribosomal subunit. It is not involved in the protein synthesizing functions of that subunit.</text>
</comment>
<comment type="similarity">
    <text evidence="1">Belongs to the bacterial ribosomal protein bL20 family.</text>
</comment>
<keyword id="KW-1185">Reference proteome</keyword>
<keyword id="KW-0687">Ribonucleoprotein</keyword>
<keyword id="KW-0689">Ribosomal protein</keyword>
<keyword id="KW-0694">RNA-binding</keyword>
<keyword id="KW-0699">rRNA-binding</keyword>
<organism>
    <name type="scientific">Streptococcus thermophilus (strain ATCC BAA-250 / LMG 18311)</name>
    <dbReference type="NCBI Taxonomy" id="264199"/>
    <lineage>
        <taxon>Bacteria</taxon>
        <taxon>Bacillati</taxon>
        <taxon>Bacillota</taxon>
        <taxon>Bacilli</taxon>
        <taxon>Lactobacillales</taxon>
        <taxon>Streptococcaceae</taxon>
        <taxon>Streptococcus</taxon>
    </lineage>
</organism>
<sequence length="119" mass="13633">MARVKGGVVSRKRRKRVLKLAKGYYGAKHILFRTAKEQVMNSYYYAYRDRRQKKRDFRKLWITRINAAARLNGLSYSQLMHGLKLAEIEVNRKMLADLAVNDAAAFTALADAAKAKLGK</sequence>
<accession>Q5M472</accession>
<gene>
    <name evidence="1" type="primary">rplT</name>
    <name type="ordered locus">stu1132</name>
</gene>
<feature type="chain" id="PRO_0000243743" description="Large ribosomal subunit protein bL20">
    <location>
        <begin position="1"/>
        <end position="119"/>
    </location>
</feature>